<name>YLZJ_BACSU</name>
<organism>
    <name type="scientific">Bacillus subtilis (strain 168)</name>
    <dbReference type="NCBI Taxonomy" id="224308"/>
    <lineage>
        <taxon>Bacteria</taxon>
        <taxon>Bacillati</taxon>
        <taxon>Bacillota</taxon>
        <taxon>Bacilli</taxon>
        <taxon>Bacillales</taxon>
        <taxon>Bacillaceae</taxon>
        <taxon>Bacillus</taxon>
    </lineage>
</organism>
<protein>
    <recommendedName>
        <fullName>Uncharacterized protein YlzJ</fullName>
    </recommendedName>
</protein>
<dbReference type="EMBL" id="AL009126">
    <property type="protein sequence ID" value="CAX52620.1"/>
    <property type="molecule type" value="Genomic_DNA"/>
</dbReference>
<dbReference type="FunCoup" id="C0H413">
    <property type="interactions" value="37"/>
</dbReference>
<dbReference type="STRING" id="224308.BSU16799"/>
<dbReference type="PaxDb" id="224308-BSU16799"/>
<dbReference type="EnsemblBacteria" id="CAX52620">
    <property type="protein sequence ID" value="CAX52620"/>
    <property type="gene ID" value="BSU_16799"/>
</dbReference>
<dbReference type="GeneID" id="8303181"/>
<dbReference type="KEGG" id="bsu:BSU16799"/>
<dbReference type="PATRIC" id="fig|224308.179.peg.1822"/>
<dbReference type="eggNOG" id="ENOG5033ACS">
    <property type="taxonomic scope" value="Bacteria"/>
</dbReference>
<dbReference type="InParanoid" id="C0H413"/>
<dbReference type="OrthoDB" id="1683573at2"/>
<dbReference type="BioCyc" id="BSUB:BSU16799-MONOMER"/>
<dbReference type="Proteomes" id="UP000001570">
    <property type="component" value="Chromosome"/>
</dbReference>
<dbReference type="InterPro" id="IPR025619">
    <property type="entry name" value="YlzJ"/>
</dbReference>
<dbReference type="Pfam" id="PF14035">
    <property type="entry name" value="YlzJ"/>
    <property type="match status" value="1"/>
</dbReference>
<keyword id="KW-1185">Reference proteome</keyword>
<proteinExistence type="predicted"/>
<gene>
    <name type="primary">ylzJ</name>
    <name type="ordered locus">BSU16799</name>
</gene>
<sequence>MILYTVMPQEIVFAEQNQETSAHEQIEYKGVPLLVEMKGNEAEVIQIMSTNPMHFLHPDISPGQKLKLNV</sequence>
<accession>C0H413</accession>
<reference key="1">
    <citation type="journal article" date="1997" name="Nature">
        <title>The complete genome sequence of the Gram-positive bacterium Bacillus subtilis.</title>
        <authorList>
            <person name="Kunst F."/>
            <person name="Ogasawara N."/>
            <person name="Moszer I."/>
            <person name="Albertini A.M."/>
            <person name="Alloni G."/>
            <person name="Azevedo V."/>
            <person name="Bertero M.G."/>
            <person name="Bessieres P."/>
            <person name="Bolotin A."/>
            <person name="Borchert S."/>
            <person name="Borriss R."/>
            <person name="Boursier L."/>
            <person name="Brans A."/>
            <person name="Braun M."/>
            <person name="Brignell S.C."/>
            <person name="Bron S."/>
            <person name="Brouillet S."/>
            <person name="Bruschi C.V."/>
            <person name="Caldwell B."/>
            <person name="Capuano V."/>
            <person name="Carter N.M."/>
            <person name="Choi S.-K."/>
            <person name="Codani J.-J."/>
            <person name="Connerton I.F."/>
            <person name="Cummings N.J."/>
            <person name="Daniel R.A."/>
            <person name="Denizot F."/>
            <person name="Devine K.M."/>
            <person name="Duesterhoeft A."/>
            <person name="Ehrlich S.D."/>
            <person name="Emmerson P.T."/>
            <person name="Entian K.-D."/>
            <person name="Errington J."/>
            <person name="Fabret C."/>
            <person name="Ferrari E."/>
            <person name="Foulger D."/>
            <person name="Fritz C."/>
            <person name="Fujita M."/>
            <person name="Fujita Y."/>
            <person name="Fuma S."/>
            <person name="Galizzi A."/>
            <person name="Galleron N."/>
            <person name="Ghim S.-Y."/>
            <person name="Glaser P."/>
            <person name="Goffeau A."/>
            <person name="Golightly E.J."/>
            <person name="Grandi G."/>
            <person name="Guiseppi G."/>
            <person name="Guy B.J."/>
            <person name="Haga K."/>
            <person name="Haiech J."/>
            <person name="Harwood C.R."/>
            <person name="Henaut A."/>
            <person name="Hilbert H."/>
            <person name="Holsappel S."/>
            <person name="Hosono S."/>
            <person name="Hullo M.-F."/>
            <person name="Itaya M."/>
            <person name="Jones L.-M."/>
            <person name="Joris B."/>
            <person name="Karamata D."/>
            <person name="Kasahara Y."/>
            <person name="Klaerr-Blanchard M."/>
            <person name="Klein C."/>
            <person name="Kobayashi Y."/>
            <person name="Koetter P."/>
            <person name="Koningstein G."/>
            <person name="Krogh S."/>
            <person name="Kumano M."/>
            <person name="Kurita K."/>
            <person name="Lapidus A."/>
            <person name="Lardinois S."/>
            <person name="Lauber J."/>
            <person name="Lazarevic V."/>
            <person name="Lee S.-M."/>
            <person name="Levine A."/>
            <person name="Liu H."/>
            <person name="Masuda S."/>
            <person name="Mauel C."/>
            <person name="Medigue C."/>
            <person name="Medina N."/>
            <person name="Mellado R.P."/>
            <person name="Mizuno M."/>
            <person name="Moestl D."/>
            <person name="Nakai S."/>
            <person name="Noback M."/>
            <person name="Noone D."/>
            <person name="O'Reilly M."/>
            <person name="Ogawa K."/>
            <person name="Ogiwara A."/>
            <person name="Oudega B."/>
            <person name="Park S.-H."/>
            <person name="Parro V."/>
            <person name="Pohl T.M."/>
            <person name="Portetelle D."/>
            <person name="Porwollik S."/>
            <person name="Prescott A.M."/>
            <person name="Presecan E."/>
            <person name="Pujic P."/>
            <person name="Purnelle B."/>
            <person name="Rapoport G."/>
            <person name="Rey M."/>
            <person name="Reynolds S."/>
            <person name="Rieger M."/>
            <person name="Rivolta C."/>
            <person name="Rocha E."/>
            <person name="Roche B."/>
            <person name="Rose M."/>
            <person name="Sadaie Y."/>
            <person name="Sato T."/>
            <person name="Scanlan E."/>
            <person name="Schleich S."/>
            <person name="Schroeter R."/>
            <person name="Scoffone F."/>
            <person name="Sekiguchi J."/>
            <person name="Sekowska A."/>
            <person name="Seror S.J."/>
            <person name="Serror P."/>
            <person name="Shin B.-S."/>
            <person name="Soldo B."/>
            <person name="Sorokin A."/>
            <person name="Tacconi E."/>
            <person name="Takagi T."/>
            <person name="Takahashi H."/>
            <person name="Takemaru K."/>
            <person name="Takeuchi M."/>
            <person name="Tamakoshi A."/>
            <person name="Tanaka T."/>
            <person name="Terpstra P."/>
            <person name="Tognoni A."/>
            <person name="Tosato V."/>
            <person name="Uchiyama S."/>
            <person name="Vandenbol M."/>
            <person name="Vannier F."/>
            <person name="Vassarotti A."/>
            <person name="Viari A."/>
            <person name="Wambutt R."/>
            <person name="Wedler E."/>
            <person name="Wedler H."/>
            <person name="Weitzenegger T."/>
            <person name="Winters P."/>
            <person name="Wipat A."/>
            <person name="Yamamoto H."/>
            <person name="Yamane K."/>
            <person name="Yasumoto K."/>
            <person name="Yata K."/>
            <person name="Yoshida K."/>
            <person name="Yoshikawa H.-F."/>
            <person name="Zumstein E."/>
            <person name="Yoshikawa H."/>
            <person name="Danchin A."/>
        </authorList>
    </citation>
    <scope>NUCLEOTIDE SEQUENCE [LARGE SCALE GENOMIC DNA]</scope>
    <source>
        <strain>168</strain>
    </source>
</reference>
<feature type="chain" id="PRO_0000382668" description="Uncharacterized protein YlzJ">
    <location>
        <begin position="1"/>
        <end position="70"/>
    </location>
</feature>